<organism>
    <name type="scientific">Streptococcus pyogenes serotype M12 (strain MGAS2096)</name>
    <dbReference type="NCBI Taxonomy" id="370553"/>
    <lineage>
        <taxon>Bacteria</taxon>
        <taxon>Bacillati</taxon>
        <taxon>Bacillota</taxon>
        <taxon>Bacilli</taxon>
        <taxon>Lactobacillales</taxon>
        <taxon>Streptococcaceae</taxon>
        <taxon>Streptococcus</taxon>
    </lineage>
</organism>
<gene>
    <name evidence="1" type="primary">mraY</name>
    <name type="ordered locus">MGAS2096_Spy1388</name>
</gene>
<evidence type="ECO:0000255" key="1">
    <source>
        <dbReference type="HAMAP-Rule" id="MF_00038"/>
    </source>
</evidence>
<comment type="function">
    <text evidence="1">Catalyzes the initial step of the lipid cycle reactions in the biosynthesis of the cell wall peptidoglycan: transfers peptidoglycan precursor phospho-MurNAc-pentapeptide from UDP-MurNAc-pentapeptide onto the lipid carrier undecaprenyl phosphate, yielding undecaprenyl-pyrophosphoryl-MurNAc-pentapeptide, known as lipid I.</text>
</comment>
<comment type="catalytic activity">
    <reaction evidence="1">
        <text>UDP-N-acetyl-alpha-D-muramoyl-L-alanyl-gamma-D-glutamyl-L-lysyl-D-alanyl-D-alanine + di-trans,octa-cis-undecaprenyl phosphate = Mur2Ac(oyl-L-Ala-gamma-D-Glu-L-Lys-D-Ala-D-Ala)-di-trans,octa-cis-undecaprenyl diphosphate + UMP</text>
        <dbReference type="Rhea" id="RHEA:21920"/>
        <dbReference type="ChEBI" id="CHEBI:57865"/>
        <dbReference type="ChEBI" id="CHEBI:60032"/>
        <dbReference type="ChEBI" id="CHEBI:60392"/>
        <dbReference type="ChEBI" id="CHEBI:70758"/>
        <dbReference type="EC" id="2.7.8.13"/>
    </reaction>
</comment>
<comment type="cofactor">
    <cofactor evidence="1">
        <name>Mg(2+)</name>
        <dbReference type="ChEBI" id="CHEBI:18420"/>
    </cofactor>
</comment>
<comment type="pathway">
    <text evidence="1">Cell wall biogenesis; peptidoglycan biosynthesis.</text>
</comment>
<comment type="subcellular location">
    <subcellularLocation>
        <location evidence="1">Cell membrane</location>
        <topology evidence="1">Multi-pass membrane protein</topology>
    </subcellularLocation>
</comment>
<comment type="similarity">
    <text evidence="1">Belongs to the glycosyltransferase 4 family. MraY subfamily.</text>
</comment>
<keyword id="KW-0131">Cell cycle</keyword>
<keyword id="KW-0132">Cell division</keyword>
<keyword id="KW-1003">Cell membrane</keyword>
<keyword id="KW-0133">Cell shape</keyword>
<keyword id="KW-0961">Cell wall biogenesis/degradation</keyword>
<keyword id="KW-0460">Magnesium</keyword>
<keyword id="KW-0472">Membrane</keyword>
<keyword id="KW-0479">Metal-binding</keyword>
<keyword id="KW-0573">Peptidoglycan synthesis</keyword>
<keyword id="KW-0808">Transferase</keyword>
<keyword id="KW-0812">Transmembrane</keyword>
<keyword id="KW-1133">Transmembrane helix</keyword>
<dbReference type="EC" id="2.7.8.13" evidence="1"/>
<dbReference type="EMBL" id="CP000261">
    <property type="protein sequence ID" value="ABF36440.1"/>
    <property type="molecule type" value="Genomic_DNA"/>
</dbReference>
<dbReference type="SMR" id="Q1JAG8"/>
<dbReference type="KEGG" id="spj:MGAS2096_Spy1388"/>
<dbReference type="HOGENOM" id="CLU_023982_0_1_9"/>
<dbReference type="UniPathway" id="UPA00219"/>
<dbReference type="GO" id="GO:0005886">
    <property type="term" value="C:plasma membrane"/>
    <property type="evidence" value="ECO:0007669"/>
    <property type="project" value="UniProtKB-SubCell"/>
</dbReference>
<dbReference type="GO" id="GO:0046872">
    <property type="term" value="F:metal ion binding"/>
    <property type="evidence" value="ECO:0007669"/>
    <property type="project" value="UniProtKB-KW"/>
</dbReference>
<dbReference type="GO" id="GO:0008963">
    <property type="term" value="F:phospho-N-acetylmuramoyl-pentapeptide-transferase activity"/>
    <property type="evidence" value="ECO:0007669"/>
    <property type="project" value="UniProtKB-UniRule"/>
</dbReference>
<dbReference type="GO" id="GO:0051301">
    <property type="term" value="P:cell division"/>
    <property type="evidence" value="ECO:0007669"/>
    <property type="project" value="UniProtKB-KW"/>
</dbReference>
<dbReference type="GO" id="GO:0071555">
    <property type="term" value="P:cell wall organization"/>
    <property type="evidence" value="ECO:0007669"/>
    <property type="project" value="UniProtKB-KW"/>
</dbReference>
<dbReference type="GO" id="GO:0009252">
    <property type="term" value="P:peptidoglycan biosynthetic process"/>
    <property type="evidence" value="ECO:0007669"/>
    <property type="project" value="UniProtKB-UniRule"/>
</dbReference>
<dbReference type="GO" id="GO:0008360">
    <property type="term" value="P:regulation of cell shape"/>
    <property type="evidence" value="ECO:0007669"/>
    <property type="project" value="UniProtKB-KW"/>
</dbReference>
<dbReference type="CDD" id="cd06852">
    <property type="entry name" value="GT_MraY"/>
    <property type="match status" value="1"/>
</dbReference>
<dbReference type="HAMAP" id="MF_00038">
    <property type="entry name" value="MraY"/>
    <property type="match status" value="1"/>
</dbReference>
<dbReference type="InterPro" id="IPR000715">
    <property type="entry name" value="Glycosyl_transferase_4"/>
</dbReference>
<dbReference type="InterPro" id="IPR003524">
    <property type="entry name" value="PNAcMuramoyl-5peptid_Trfase"/>
</dbReference>
<dbReference type="InterPro" id="IPR018480">
    <property type="entry name" value="PNAcMuramoyl-5peptid_Trfase_CS"/>
</dbReference>
<dbReference type="NCBIfam" id="TIGR00445">
    <property type="entry name" value="mraY"/>
    <property type="match status" value="1"/>
</dbReference>
<dbReference type="PANTHER" id="PTHR22926">
    <property type="entry name" value="PHOSPHO-N-ACETYLMURAMOYL-PENTAPEPTIDE-TRANSFERASE"/>
    <property type="match status" value="1"/>
</dbReference>
<dbReference type="PANTHER" id="PTHR22926:SF5">
    <property type="entry name" value="PHOSPHO-N-ACETYLMURAMOYL-PENTAPEPTIDE-TRANSFERASE HOMOLOG"/>
    <property type="match status" value="1"/>
</dbReference>
<dbReference type="Pfam" id="PF00953">
    <property type="entry name" value="Glycos_transf_4"/>
    <property type="match status" value="1"/>
</dbReference>
<dbReference type="Pfam" id="PF10555">
    <property type="entry name" value="MraY_sig1"/>
    <property type="match status" value="1"/>
</dbReference>
<dbReference type="PROSITE" id="PS01348">
    <property type="entry name" value="MRAY_2"/>
    <property type="match status" value="1"/>
</dbReference>
<name>MRAY_STRPB</name>
<proteinExistence type="inferred from homology"/>
<reference key="1">
    <citation type="journal article" date="2006" name="Proc. Natl. Acad. Sci. U.S.A.">
        <title>Molecular genetic anatomy of inter- and intraserotype variation in the human bacterial pathogen group A Streptococcus.</title>
        <authorList>
            <person name="Beres S.B."/>
            <person name="Richter E.W."/>
            <person name="Nagiec M.J."/>
            <person name="Sumby P."/>
            <person name="Porcella S.F."/>
            <person name="DeLeo F.R."/>
            <person name="Musser J.M."/>
        </authorList>
    </citation>
    <scope>NUCLEOTIDE SEQUENCE [LARGE SCALE GENOMIC DNA]</scope>
    <source>
        <strain>MGAS2096</strain>
    </source>
</reference>
<sequence>MFLTLIAAIISFMVSAFTMPYFIKFYQLKKIGGQQMHEDVKQHLAKAGTPTMGGTVFLLVATAVSLLVSLFSIKNTQSLALISGILSIVVIYGIIGFLDDFLKIFKQINEGLTAKQKLALQLVGGLMFYFLHVSPSGISSINVFGYQLPLGIFYLFFVLFWVVGFSNAVNLTDGIDGLASISVVISLVTYGVIAYVQSQFDVLLLIGAMIGALLGFFCFNHKPAKVFMGDVGSLALGAMLAAISIALRQEWTLLIIGIVYVLETSSVMLQVSYFKYTKKKYGEGRRIFRMTPFHHHLELGGLSGKGKKWSEWQVDAFLWGVGSLASLLVLAILYVF</sequence>
<protein>
    <recommendedName>
        <fullName evidence="1">Phospho-N-acetylmuramoyl-pentapeptide-transferase</fullName>
        <ecNumber evidence="1">2.7.8.13</ecNumber>
    </recommendedName>
    <alternativeName>
        <fullName evidence="1">UDP-MurNAc-pentapeptide phosphotransferase</fullName>
    </alternativeName>
</protein>
<feature type="chain" id="PRO_1000003073" description="Phospho-N-acetylmuramoyl-pentapeptide-transferase">
    <location>
        <begin position="1"/>
        <end position="336"/>
    </location>
</feature>
<feature type="transmembrane region" description="Helical" evidence="1">
    <location>
        <begin position="3"/>
        <end position="23"/>
    </location>
</feature>
<feature type="transmembrane region" description="Helical" evidence="1">
    <location>
        <begin position="53"/>
        <end position="73"/>
    </location>
</feature>
<feature type="transmembrane region" description="Helical" evidence="1">
    <location>
        <begin position="78"/>
        <end position="98"/>
    </location>
</feature>
<feature type="transmembrane region" description="Helical" evidence="1">
    <location>
        <begin position="118"/>
        <end position="138"/>
    </location>
</feature>
<feature type="transmembrane region" description="Helical" evidence="1">
    <location>
        <begin position="143"/>
        <end position="163"/>
    </location>
</feature>
<feature type="transmembrane region" description="Helical" evidence="1">
    <location>
        <begin position="174"/>
        <end position="194"/>
    </location>
</feature>
<feature type="transmembrane region" description="Helical" evidence="1">
    <location>
        <begin position="200"/>
        <end position="220"/>
    </location>
</feature>
<feature type="transmembrane region" description="Helical" evidence="1">
    <location>
        <begin position="226"/>
        <end position="246"/>
    </location>
</feature>
<feature type="transmembrane region" description="Helical" evidence="1">
    <location>
        <begin position="251"/>
        <end position="271"/>
    </location>
</feature>
<feature type="transmembrane region" description="Helical" evidence="1">
    <location>
        <begin position="316"/>
        <end position="336"/>
    </location>
</feature>
<accession>Q1JAG8</accession>